<accession>P0C5C6</accession>
<accession>P27349</accession>
<accession>Q5VRE9</accession>
<protein>
    <recommendedName>
        <fullName>Protein GOS9</fullName>
    </recommendedName>
</protein>
<sequence length="139" mass="14120">MSTQLVKIGTWGGNGGGRVDLSVLPRSLKSVTIRSGAAIDAIAFTYIGTDGKEHLAGPWGGGGGNPTTITLGSQEFVKGISGTFTNVVTNLKIVTNVTTYNFGQGGGTAFSLPLQSGSVVGFFGRAGALVDSIGVYVHI</sequence>
<dbReference type="EMBL" id="AP002864">
    <property type="protein sequence ID" value="BAD67976.1"/>
    <property type="status" value="ALT_SEQ"/>
    <property type="molecule type" value="Genomic_DNA"/>
</dbReference>
<dbReference type="EMBL" id="AP014962">
    <property type="status" value="NOT_ANNOTATED_CDS"/>
    <property type="molecule type" value="Genomic_DNA"/>
</dbReference>
<dbReference type="SMR" id="P0C5C6"/>
<dbReference type="FunCoup" id="P0C5C6">
    <property type="interactions" value="22"/>
</dbReference>
<dbReference type="STRING" id="39947.P0C5C6"/>
<dbReference type="PaxDb" id="39947-P0C5C6"/>
<dbReference type="eggNOG" id="ENOG502S4MA">
    <property type="taxonomic scope" value="Eukaryota"/>
</dbReference>
<dbReference type="InParanoid" id="P0C5C6"/>
<dbReference type="Proteomes" id="UP000000763">
    <property type="component" value="Chromosome 6"/>
</dbReference>
<dbReference type="Proteomes" id="UP000059680">
    <property type="component" value="Chromosome 6"/>
</dbReference>
<dbReference type="GO" id="GO:0030246">
    <property type="term" value="F:carbohydrate binding"/>
    <property type="evidence" value="ECO:0007669"/>
    <property type="project" value="UniProtKB-KW"/>
</dbReference>
<dbReference type="CDD" id="cd09612">
    <property type="entry name" value="Jacalin"/>
    <property type="match status" value="1"/>
</dbReference>
<dbReference type="Gene3D" id="2.100.10.30">
    <property type="entry name" value="Jacalin-like lectin domain"/>
    <property type="match status" value="1"/>
</dbReference>
<dbReference type="InterPro" id="IPR001229">
    <property type="entry name" value="Jacalin-like_lectin_dom"/>
</dbReference>
<dbReference type="InterPro" id="IPR033734">
    <property type="entry name" value="Jacalin-like_lectin_dom_plant"/>
</dbReference>
<dbReference type="InterPro" id="IPR036404">
    <property type="entry name" value="Jacalin-like_lectin_dom_sf"/>
</dbReference>
<dbReference type="PANTHER" id="PTHR46506">
    <property type="entry name" value="OS05G0143600 PROTEIN"/>
    <property type="match status" value="1"/>
</dbReference>
<dbReference type="Pfam" id="PF01419">
    <property type="entry name" value="Jacalin"/>
    <property type="match status" value="1"/>
</dbReference>
<dbReference type="SMART" id="SM00915">
    <property type="entry name" value="Jacalin"/>
    <property type="match status" value="1"/>
</dbReference>
<dbReference type="SUPFAM" id="SSF51101">
    <property type="entry name" value="Mannose-binding lectins"/>
    <property type="match status" value="1"/>
</dbReference>
<dbReference type="PROSITE" id="PS51752">
    <property type="entry name" value="JACALIN_LECTIN"/>
    <property type="match status" value="1"/>
</dbReference>
<keyword id="KW-0430">Lectin</keyword>
<keyword id="KW-1185">Reference proteome</keyword>
<gene>
    <name type="primary">GOS9</name>
    <name type="ordered locus">Os06g0169100</name>
    <name type="ordered locus">LOC_Os06g07250</name>
    <name type="ORF">OSJNBa0033B09.25</name>
</gene>
<reference key="1">
    <citation type="journal article" date="2005" name="Nature">
        <title>The map-based sequence of the rice genome.</title>
        <authorList>
            <consortium name="International rice genome sequencing project (IRGSP)"/>
        </authorList>
    </citation>
    <scope>NUCLEOTIDE SEQUENCE [LARGE SCALE GENOMIC DNA]</scope>
    <source>
        <strain>cv. Nipponbare</strain>
    </source>
</reference>
<reference key="2">
    <citation type="journal article" date="2013" name="Rice">
        <title>Improvement of the Oryza sativa Nipponbare reference genome using next generation sequence and optical map data.</title>
        <authorList>
            <person name="Kawahara Y."/>
            <person name="de la Bastide M."/>
            <person name="Hamilton J.P."/>
            <person name="Kanamori H."/>
            <person name="McCombie W.R."/>
            <person name="Ouyang S."/>
            <person name="Schwartz D.C."/>
            <person name="Tanaka T."/>
            <person name="Wu J."/>
            <person name="Zhou S."/>
            <person name="Childs K.L."/>
            <person name="Davidson R.M."/>
            <person name="Lin H."/>
            <person name="Quesada-Ocampo L."/>
            <person name="Vaillancourt B."/>
            <person name="Sakai H."/>
            <person name="Lee S.S."/>
            <person name="Kim J."/>
            <person name="Numa H."/>
            <person name="Itoh T."/>
            <person name="Buell C.R."/>
            <person name="Matsumoto T."/>
        </authorList>
    </citation>
    <scope>GENOME REANNOTATION</scope>
    <source>
        <strain>cv. Nipponbare</strain>
    </source>
</reference>
<evidence type="ECO:0000255" key="1">
    <source>
        <dbReference type="PROSITE-ProRule" id="PRU01088"/>
    </source>
</evidence>
<evidence type="ECO:0000305" key="2"/>
<comment type="sequence caution" evidence="2">
    <conflict type="erroneous gene model prediction">
        <sequence resource="EMBL-CDS" id="BAD67976"/>
    </conflict>
</comment>
<feature type="chain" id="PRO_0000087548" description="Protein GOS9">
    <location>
        <begin position="1"/>
        <end position="139"/>
    </location>
</feature>
<feature type="domain" description="Jacalin-type lectin" evidence="1">
    <location>
        <begin position="5"/>
        <end position="139"/>
    </location>
</feature>
<proteinExistence type="evidence at transcript level"/>
<name>GOS9_ORYSJ</name>
<organism>
    <name type="scientific">Oryza sativa subsp. japonica</name>
    <name type="common">Rice</name>
    <dbReference type="NCBI Taxonomy" id="39947"/>
    <lineage>
        <taxon>Eukaryota</taxon>
        <taxon>Viridiplantae</taxon>
        <taxon>Streptophyta</taxon>
        <taxon>Embryophyta</taxon>
        <taxon>Tracheophyta</taxon>
        <taxon>Spermatophyta</taxon>
        <taxon>Magnoliopsida</taxon>
        <taxon>Liliopsida</taxon>
        <taxon>Poales</taxon>
        <taxon>Poaceae</taxon>
        <taxon>BOP clade</taxon>
        <taxon>Oryzoideae</taxon>
        <taxon>Oryzeae</taxon>
        <taxon>Oryzinae</taxon>
        <taxon>Oryza</taxon>
        <taxon>Oryza sativa</taxon>
    </lineage>
</organism>